<name>CTL16_AEDAE</name>
<gene>
    <name evidence="5" type="primary">CTL16</name>
    <name evidence="5" type="ORF">AAEL000533</name>
</gene>
<sequence>MALSLYLIAVICSLVGFTASQQTCDNDNRFCFPNVVANWIGAAEYCSRNGWRLAVLDSEQKQQQVEELAQRVDAFKTAKVELWIGASDLAREGKFMWHPTGLDVSYSKWIAGMPDNKDGYEHCVHLWYEPSRLINWHWNDVVCASMRRFVCEQA</sequence>
<organism evidence="7">
    <name type="scientific">Aedes aegypti</name>
    <name type="common">Yellowfever mosquito</name>
    <name type="synonym">Culex aegypti</name>
    <dbReference type="NCBI Taxonomy" id="7159"/>
    <lineage>
        <taxon>Eukaryota</taxon>
        <taxon>Metazoa</taxon>
        <taxon>Ecdysozoa</taxon>
        <taxon>Arthropoda</taxon>
        <taxon>Hexapoda</taxon>
        <taxon>Insecta</taxon>
        <taxon>Pterygota</taxon>
        <taxon>Neoptera</taxon>
        <taxon>Endopterygota</taxon>
        <taxon>Diptera</taxon>
        <taxon>Nematocera</taxon>
        <taxon>Culicoidea</taxon>
        <taxon>Culicidae</taxon>
        <taxon>Culicinae</taxon>
        <taxon>Aedini</taxon>
        <taxon>Aedes</taxon>
        <taxon>Stegomyia</taxon>
    </lineage>
</organism>
<comment type="function">
    <text evidence="3 5">Putative lectin (Probable). May have a regulatory role in mosquito immunity (PubMed:38813522). Probably suppresses replication of dengue virus type 2 in mosquito salivary glands (PubMed:38813522).</text>
</comment>
<comment type="subunit">
    <text evidence="3">(Microbial infection) Interacts with non-structural protein 1 of dengue virus type 2 (PubMed:38813522). Interacts with envelope protein E of dengue virus type 2 (PubMed:38813522).</text>
</comment>
<comment type="subcellular location">
    <subcellularLocation>
        <location evidence="3">Secreted</location>
    </subcellularLocation>
</comment>
<comment type="tissue specificity">
    <text evidence="3">Female salivary gland (at protein level) (PubMed:38813522). Not detected in female carcass without salivary glands (at protein level) (PubMed:38813522). Not detected in male tissues (at protein level) (PubMed:38813522).</text>
</comment>
<comment type="disruption phenotype">
    <text evidence="3">(Microbial infection) RNAi-mediated knockdown results in increased expression of dengue virus type 2 envelope protein E in mosquito tissues at 7, 10 and 14 days post-infection via thoracic injection of the virus (PubMed:38813522). Increased titers of dengue virus type 2 in salivary glands of infected mosquitoes at 7, 10 and 14 days post-infection (PubMed:38813522). Increased transmission efficiency of dengue virus type 2 by mosquitoes, measured as a proportion of mosquitoes with positive infectious saliva among the total mosquitoes tested (PubMed:38813522). Increased infection rate in mice bitten by mosquitoes infected with dengue virus type 2 at 4 and 6 days post blood feeding, measured as a proportion of virus-positive mice among the total mice tested (PubMed:38813522). Reduced levels of the JAK/STAT pathway components DOME and HOP in salivary glands following infectious blood meal (PubMed:38813522). Reduced levels of the IMD pathway component FADD in salivary glands following infectious blood meal (PubMed:38813522).</text>
</comment>
<accession>Q17NX6</accession>
<accession>Q8T9U0</accession>
<reference evidence="7" key="1">
    <citation type="journal article" date="2018" name="Nature">
        <title>Improved reference genome of Aedes aegypti informs arbovirus vector control.</title>
        <authorList>
            <person name="Matthews B.J."/>
            <person name="Dudchenko O."/>
            <person name="Kingan S.B."/>
            <person name="Koren S."/>
            <person name="Antoshechkin I."/>
            <person name="Crawford J.E."/>
            <person name="Glassford W.J."/>
            <person name="Herre M."/>
            <person name="Redmond S.N."/>
            <person name="Rose N.H."/>
            <person name="Weedall G.D."/>
            <person name="Wu Y."/>
            <person name="Batra S.S."/>
            <person name="Brito-Sierra C.A."/>
            <person name="Buckingham S.D."/>
            <person name="Campbell C.L."/>
            <person name="Chan S."/>
            <person name="Cox E."/>
            <person name="Evans B.R."/>
            <person name="Fansiri T."/>
            <person name="Filipovic I."/>
            <person name="Fontaine A."/>
            <person name="Gloria-Soria A."/>
            <person name="Hall R."/>
            <person name="Joardar V.S."/>
            <person name="Jones A.K."/>
            <person name="Kay R.G.G."/>
            <person name="Kodali V.K."/>
            <person name="Lee J."/>
            <person name="Lycett G.J."/>
            <person name="Mitchell S.N."/>
            <person name="Muehling J."/>
            <person name="Murphy M.R."/>
            <person name="Omer A.D."/>
            <person name="Partridge F.A."/>
            <person name="Peluso P."/>
            <person name="Aiden A.P."/>
            <person name="Ramasamy V."/>
            <person name="Rasic G."/>
            <person name="Roy S."/>
            <person name="Saavedra-Rodriguez K."/>
            <person name="Sharan S."/>
            <person name="Sharma A."/>
            <person name="Smith M.L."/>
            <person name="Turner J."/>
            <person name="Weakley A.M."/>
            <person name="Zhao Z."/>
            <person name="Akbari O.S."/>
            <person name="Black W.C. IV"/>
            <person name="Cao H."/>
            <person name="Darby A.C."/>
            <person name="Hill C.A."/>
            <person name="Johnston J.S."/>
            <person name="Murphy T.D."/>
            <person name="Raikhel A.S."/>
            <person name="Sattelle D.B."/>
            <person name="Sharakhov I.V."/>
            <person name="White B.J."/>
            <person name="Zhao L."/>
            <person name="Aiden E.L."/>
            <person name="Mann R.S."/>
            <person name="Lambrechts L."/>
            <person name="Powell J.R."/>
            <person name="Sharakhova M.V."/>
            <person name="Tu Z."/>
            <person name="Robertson H.M."/>
            <person name="McBride C.S."/>
            <person name="Hastie A.R."/>
            <person name="Korlach J."/>
            <person name="Neafsey D.E."/>
            <person name="Phillippy A.M."/>
            <person name="Vosshall L.B."/>
        </authorList>
    </citation>
    <scope>NUCLEOTIDE SEQUENCE [LARGE SCALE GENOMIC DNA]</scope>
    <source>
        <strain evidence="7">LVP_AGWG</strain>
    </source>
</reference>
<reference evidence="6" key="2">
    <citation type="journal article" date="2002" name="Insect Biochem. Mol. Biol.">
        <title>Toward a description of the sialome of the adult female mosquito Aedes aegypti.</title>
        <authorList>
            <person name="Valenzuela J.G."/>
            <person name="Pham V.M."/>
            <person name="Garfield M.K."/>
            <person name="Francischetti I.M."/>
            <person name="Ribeiro J.M."/>
        </authorList>
    </citation>
    <scope>NUCLEOTIDE SEQUENCE [LARGE SCALE MRNA]</scope>
    <source>
        <strain evidence="6">Black eye</strain>
        <tissue evidence="6">Salivary gland</tissue>
    </source>
</reference>
<reference evidence="5" key="3">
    <citation type="journal article" date="2024" name="PNAS Nexus">
        <title>Effect of C-type lectin 16 on dengue virus infection in Aedes aegypti salivary glands.</title>
        <authorList>
            <person name="Chang Y.C."/>
            <person name="Liu W.L."/>
            <person name="Fang P.H."/>
            <person name="Li J.C."/>
            <person name="Liu K.L."/>
            <person name="Huang J.L."/>
            <person name="Chen H.W."/>
            <person name="Kao C.F."/>
            <person name="Chen C.H."/>
        </authorList>
    </citation>
    <scope>FUNCTION</scope>
    <scope>INTERACTION WITH DENGUE VIRUS NON-STRUCTURAL PROTEIN 1 AND ENVELOPE PROTEIN E (MICROBIAL INFECTION)</scope>
    <scope>SUBCELLULAR LOCATION</scope>
    <scope>TISSUE SPECIFICITY</scope>
    <scope>DISRUPTION PHENOTYPE (MICROBIAL INFECTION)</scope>
    <source>
        <strain evidence="4">Liverpool</strain>
    </source>
</reference>
<proteinExistence type="evidence at protein level"/>
<protein>
    <recommendedName>
        <fullName evidence="4">C-type lectin 16</fullName>
    </recommendedName>
</protein>
<feature type="signal peptide" evidence="1">
    <location>
        <begin position="1"/>
        <end position="20"/>
    </location>
</feature>
<feature type="chain" id="PRO_0000461334" description="C-type lectin 16" evidence="1">
    <location>
        <begin position="21"/>
        <end position="154"/>
    </location>
</feature>
<feature type="domain" description="C-type lectin" evidence="2">
    <location>
        <begin position="27"/>
        <end position="152"/>
    </location>
</feature>
<feature type="disulfide bond" evidence="2">
    <location>
        <begin position="46"/>
        <end position="151"/>
    </location>
</feature>
<feature type="disulfide bond" evidence="2">
    <location>
        <begin position="123"/>
        <end position="143"/>
    </location>
</feature>
<feature type="sequence conflict" description="In Ref. 2; AAL76029." evidence="5" ref="2">
    <original>N</original>
    <variation>S</variation>
    <location>
        <position position="26"/>
    </location>
</feature>
<feature type="sequence conflict" description="In Ref. 2; AAL76029." evidence="5" ref="2">
    <original>Q</original>
    <variation>E</variation>
    <location>
        <position position="60"/>
    </location>
</feature>
<feature type="sequence conflict" description="In Ref. 2; AAL76029." evidence="5" ref="2">
    <original>I</original>
    <variation>F</variation>
    <location>
        <position position="134"/>
    </location>
</feature>
<evidence type="ECO:0000255" key="1"/>
<evidence type="ECO:0000255" key="2">
    <source>
        <dbReference type="PROSITE-ProRule" id="PRU00040"/>
    </source>
</evidence>
<evidence type="ECO:0000269" key="3">
    <source>
    </source>
</evidence>
<evidence type="ECO:0000303" key="4">
    <source>
    </source>
</evidence>
<evidence type="ECO:0000305" key="5"/>
<evidence type="ECO:0000312" key="6">
    <source>
        <dbReference type="EMBL" id="AAL76029.1"/>
    </source>
</evidence>
<evidence type="ECO:0000312" key="7">
    <source>
        <dbReference type="Proteomes" id="UP000008820"/>
    </source>
</evidence>
<keyword id="KW-1015">Disulfide bond</keyword>
<keyword id="KW-0430">Lectin</keyword>
<keyword id="KW-1185">Reference proteome</keyword>
<keyword id="KW-0964">Secreted</keyword>
<keyword id="KW-0732">Signal</keyword>
<dbReference type="EMBL" id="AF466606">
    <property type="protein sequence ID" value="AAL76029.1"/>
    <property type="molecule type" value="mRNA"/>
</dbReference>
<dbReference type="SMR" id="Q17NX6"/>
<dbReference type="FunCoup" id="Q17NX6">
    <property type="interactions" value="19"/>
</dbReference>
<dbReference type="STRING" id="7159.Q17NX6"/>
<dbReference type="PaxDb" id="7159-AAEL000533-PA"/>
<dbReference type="EnsemblMetazoa" id="AAEL000533-RA">
    <property type="protein sequence ID" value="AAEL000533-PA"/>
    <property type="gene ID" value="AAEL000533"/>
</dbReference>
<dbReference type="GeneID" id="5563675"/>
<dbReference type="KEGG" id="aag:5563675"/>
<dbReference type="VEuPathDB" id="VectorBase:AAEL000533"/>
<dbReference type="eggNOG" id="KOG4297">
    <property type="taxonomic scope" value="Eukaryota"/>
</dbReference>
<dbReference type="HOGENOM" id="CLU_049894_10_0_1"/>
<dbReference type="InParanoid" id="Q17NX6"/>
<dbReference type="OMA" id="NWANHEP"/>
<dbReference type="OrthoDB" id="6340082at2759"/>
<dbReference type="Proteomes" id="UP000008820">
    <property type="component" value="Chromosome 3"/>
</dbReference>
<dbReference type="GO" id="GO:0005576">
    <property type="term" value="C:extracellular region"/>
    <property type="evidence" value="ECO:0007669"/>
    <property type="project" value="UniProtKB-SubCell"/>
</dbReference>
<dbReference type="GO" id="GO:0030246">
    <property type="term" value="F:carbohydrate binding"/>
    <property type="evidence" value="ECO:0007669"/>
    <property type="project" value="UniProtKB-KW"/>
</dbReference>
<dbReference type="CDD" id="cd00037">
    <property type="entry name" value="CLECT"/>
    <property type="match status" value="1"/>
</dbReference>
<dbReference type="Gene3D" id="3.10.100.10">
    <property type="entry name" value="Mannose-Binding Protein A, subunit A"/>
    <property type="match status" value="1"/>
</dbReference>
<dbReference type="InterPro" id="IPR001304">
    <property type="entry name" value="C-type_lectin-like"/>
</dbReference>
<dbReference type="InterPro" id="IPR016186">
    <property type="entry name" value="C-type_lectin-like/link_sf"/>
</dbReference>
<dbReference type="InterPro" id="IPR050111">
    <property type="entry name" value="C-type_lectin/snaclec_domain"/>
</dbReference>
<dbReference type="InterPro" id="IPR016187">
    <property type="entry name" value="CTDL_fold"/>
</dbReference>
<dbReference type="PANTHER" id="PTHR22803">
    <property type="entry name" value="MANNOSE, PHOSPHOLIPASE, LECTIN RECEPTOR RELATED"/>
    <property type="match status" value="1"/>
</dbReference>
<dbReference type="Pfam" id="PF00059">
    <property type="entry name" value="Lectin_C"/>
    <property type="match status" value="1"/>
</dbReference>
<dbReference type="SMART" id="SM00034">
    <property type="entry name" value="CLECT"/>
    <property type="match status" value="1"/>
</dbReference>
<dbReference type="SUPFAM" id="SSF56436">
    <property type="entry name" value="C-type lectin-like"/>
    <property type="match status" value="1"/>
</dbReference>
<dbReference type="PROSITE" id="PS50041">
    <property type="entry name" value="C_TYPE_LECTIN_2"/>
    <property type="match status" value="1"/>
</dbReference>